<name>ACTBL_HUMAN</name>
<keyword id="KW-0067">ATP-binding</keyword>
<keyword id="KW-0963">Cytoplasm</keyword>
<keyword id="KW-0206">Cytoskeleton</keyword>
<keyword id="KW-0547">Nucleotide-binding</keyword>
<keyword id="KW-0558">Oxidation</keyword>
<keyword id="KW-1267">Proteomics identification</keyword>
<keyword id="KW-1185">Reference proteome</keyword>
<gene>
    <name type="primary">ACTBL2</name>
</gene>
<comment type="function">
    <text evidence="1">Actins are highly conserved proteins that are involved in various types of cell motility and are ubiquitously expressed in all eukaryotic cells.</text>
</comment>
<comment type="subunit">
    <text evidence="1 2">Polymerization of globular actin (G-actin) leads to a structural filament (F-actin) in the form of a two-stranded helix. Each actin can bind to 4 others (By similarity). Interacts with PFN1 and PFDN1.</text>
</comment>
<comment type="interaction">
    <interactant intactId="EBI-1773495">
        <id>Q562R1</id>
    </interactant>
    <interactant intactId="EBI-1566210">
        <id>Q8IW35</id>
        <label>CEP97</label>
    </interactant>
    <organismsDiffer>false</organismsDiffer>
    <experiments>2</experiments>
</comment>
<comment type="interaction">
    <interactant intactId="EBI-1773495">
        <id>Q562R1</id>
    </interactant>
    <interactant intactId="EBI-21889552">
        <id>P18405</id>
        <label>SRD5A1</label>
    </interactant>
    <organismsDiffer>false</organismsDiffer>
    <experiments>2</experiments>
</comment>
<comment type="subcellular location">
    <subcellularLocation>
        <location evidence="1">Cytoplasm</location>
        <location evidence="1">Cytoskeleton</location>
    </subcellularLocation>
</comment>
<comment type="PTM">
    <text evidence="1">Oxidation of Met-45 and Met-48 by MICALs (MICAL1, MICAL2 or MICAL3) to form methionine sulfoxide promotes actin filament depolymerization. MICAL1 and MICAL2 produce the (R)-S-oxide form. The (R)-S-oxide form is reverted by MSRB1 and MSRB2, which promote actin repolymerization (By similarity).</text>
</comment>
<comment type="PTM">
    <text evidence="1">Monomethylation at Lys-85 (K84me1) regulates actin-myosin interaction and actomyosin-dependent processes. Demethylation by ALKBH4 is required for maintaining actomyosin dynamics supporting normal cleavage furrow ingression during cytokinesis and cell migration (By similarity).</text>
</comment>
<comment type="miscellaneous">
    <text>In vertebrates 3 main groups of actin isoforms, alpha, beta and gamma have been identified. The alpha actins are found in muscle tissues and are a major constituent of the contractile apparatus. The beta and gamma actins coexist in most cell types as components of the cytoskeleton and as mediators of internal cell motility.</text>
</comment>
<comment type="similarity">
    <text evidence="3">Belongs to the actin family.</text>
</comment>
<organism>
    <name type="scientific">Homo sapiens</name>
    <name type="common">Human</name>
    <dbReference type="NCBI Taxonomy" id="9606"/>
    <lineage>
        <taxon>Eukaryota</taxon>
        <taxon>Metazoa</taxon>
        <taxon>Chordata</taxon>
        <taxon>Craniata</taxon>
        <taxon>Vertebrata</taxon>
        <taxon>Euteleostomi</taxon>
        <taxon>Mammalia</taxon>
        <taxon>Eutheria</taxon>
        <taxon>Euarchontoglires</taxon>
        <taxon>Primates</taxon>
        <taxon>Haplorrhini</taxon>
        <taxon>Catarrhini</taxon>
        <taxon>Hominidae</taxon>
        <taxon>Homo</taxon>
    </lineage>
</organism>
<reference key="1">
    <citation type="journal article" date="2007" name="BMC Genomics">
        <title>The full-ORF clone resource of the German cDNA consortium.</title>
        <authorList>
            <person name="Bechtel S."/>
            <person name="Rosenfelder H."/>
            <person name="Duda A."/>
            <person name="Schmidt C.P."/>
            <person name="Ernst U."/>
            <person name="Wellenreuther R."/>
            <person name="Mehrle A."/>
            <person name="Schuster C."/>
            <person name="Bahr A."/>
            <person name="Bloecker H."/>
            <person name="Heubner D."/>
            <person name="Hoerlein A."/>
            <person name="Michel G."/>
            <person name="Wedler H."/>
            <person name="Koehrer K."/>
            <person name="Ottenwaelder B."/>
            <person name="Poustka A."/>
            <person name="Wiemann S."/>
            <person name="Schupp I."/>
        </authorList>
    </citation>
    <scope>NUCLEOTIDE SEQUENCE [LARGE SCALE MRNA]</scope>
    <source>
        <tissue>Endometrial tumor</tissue>
    </source>
</reference>
<reference key="2">
    <citation type="submission" date="2005-07" db="EMBL/GenBank/DDBJ databases">
        <authorList>
            <person name="Mural R.J."/>
            <person name="Istrail S."/>
            <person name="Sutton G.G."/>
            <person name="Florea L."/>
            <person name="Halpern A.L."/>
            <person name="Mobarry C.M."/>
            <person name="Lippert R."/>
            <person name="Walenz B."/>
            <person name="Shatkay H."/>
            <person name="Dew I."/>
            <person name="Miller J.R."/>
            <person name="Flanigan M.J."/>
            <person name="Edwards N.J."/>
            <person name="Bolanos R."/>
            <person name="Fasulo D."/>
            <person name="Halldorsson B.V."/>
            <person name="Hannenhalli S."/>
            <person name="Turner R."/>
            <person name="Yooseph S."/>
            <person name="Lu F."/>
            <person name="Nusskern D.R."/>
            <person name="Shue B.C."/>
            <person name="Zheng X.H."/>
            <person name="Zhong F."/>
            <person name="Delcher A.L."/>
            <person name="Huson D.H."/>
            <person name="Kravitz S.A."/>
            <person name="Mouchard L."/>
            <person name="Reinert K."/>
            <person name="Remington K.A."/>
            <person name="Clark A.G."/>
            <person name="Waterman M.S."/>
            <person name="Eichler E.E."/>
            <person name="Adams M.D."/>
            <person name="Hunkapiller M.W."/>
            <person name="Myers E.W."/>
            <person name="Venter J.C."/>
        </authorList>
    </citation>
    <scope>NUCLEOTIDE SEQUENCE [LARGE SCALE GENOMIC DNA]</scope>
</reference>
<reference key="3">
    <citation type="journal article" date="2004" name="Genome Res.">
        <title>The status, quality, and expansion of the NIH full-length cDNA project: the Mammalian Gene Collection (MGC).</title>
        <authorList>
            <consortium name="The MGC Project Team"/>
        </authorList>
    </citation>
    <scope>NUCLEOTIDE SEQUENCE [LARGE SCALE MRNA]</scope>
</reference>
<reference key="4">
    <citation type="journal article" date="2006" name="Hepatol. Res.">
        <title>Identification of a novel actin isoform in hepatocellular carcinoma.</title>
        <authorList>
            <person name="Chang K.-W."/>
            <person name="Yang P.-Y."/>
            <person name="Lai H.-Y."/>
            <person name="Yeh T.-S."/>
            <person name="Chen T.-C."/>
            <person name="Yeh C.-T."/>
        </authorList>
    </citation>
    <scope>NUCLEOTIDE SEQUENCE [GENOMIC DNA] OF 85-187</scope>
    <scope>INTERACTION WITH PFN1 AND PFDN1</scope>
    <source>
        <tissue>Hepatoma</tissue>
    </source>
</reference>
<reference key="5">
    <citation type="journal article" date="2011" name="BMC Syst. Biol.">
        <title>Initial characterization of the human central proteome.</title>
        <authorList>
            <person name="Burkard T.R."/>
            <person name="Planyavsky M."/>
            <person name="Kaupe I."/>
            <person name="Breitwieser F.P."/>
            <person name="Buerckstuemmer T."/>
            <person name="Bennett K.L."/>
            <person name="Superti-Furga G."/>
            <person name="Colinge J."/>
        </authorList>
    </citation>
    <scope>IDENTIFICATION BY MASS SPECTROMETRY [LARGE SCALE ANALYSIS]</scope>
</reference>
<reference key="6">
    <citation type="journal article" date="2015" name="Proteomics">
        <title>N-terminome analysis of the human mitochondrial proteome.</title>
        <authorList>
            <person name="Vaca Jacome A.S."/>
            <person name="Rabilloud T."/>
            <person name="Schaeffer-Reiss C."/>
            <person name="Rompais M."/>
            <person name="Ayoub D."/>
            <person name="Lane L."/>
            <person name="Bairoch A."/>
            <person name="Van Dorsselaer A."/>
            <person name="Carapito C."/>
        </authorList>
    </citation>
    <scope>IDENTIFICATION BY MASS SPECTROMETRY [LARGE SCALE ANALYSIS]</scope>
</reference>
<feature type="chain" id="PRO_0000318849" description="Beta-actin-like protein 2">
    <location>
        <begin position="1"/>
        <end position="376"/>
    </location>
</feature>
<feature type="modified residue" description="Methionine (R)-sulfoxide" evidence="1">
    <location>
        <position position="45"/>
    </location>
</feature>
<feature type="modified residue" description="Methionine (R)-sulfoxide" evidence="1">
    <location>
        <position position="48"/>
    </location>
</feature>
<feature type="sequence conflict" description="In Ref. 4; AAX82242." evidence="3" ref="4">
    <original>T</original>
    <variation>I</variation>
    <location>
        <position position="121"/>
    </location>
</feature>
<feature type="sequence conflict" description="In Ref. 4; AAX82260." evidence="3" ref="4">
    <original>V</original>
    <variation>A</variation>
    <location>
        <position position="135"/>
    </location>
</feature>
<feature type="sequence conflict" description="In Ref. 4; AAX82259." evidence="3" ref="4">
    <original>H</original>
    <variation>L</variation>
    <location>
        <position position="162"/>
    </location>
</feature>
<feature type="sequence conflict" description="In Ref. 4; AAX82193." evidence="3" ref="4">
    <original>I</original>
    <variation>T</variation>
    <location>
        <position position="163"/>
    </location>
</feature>
<evidence type="ECO:0000250" key="1"/>
<evidence type="ECO:0000269" key="2">
    <source>
    </source>
</evidence>
<evidence type="ECO:0000305" key="3"/>
<dbReference type="EMBL" id="BX648504">
    <property type="status" value="NOT_ANNOTATED_CDS"/>
    <property type="molecule type" value="mRNA"/>
</dbReference>
<dbReference type="EMBL" id="CH471123">
    <property type="protein sequence ID" value="EAW54967.1"/>
    <property type="molecule type" value="Genomic_DNA"/>
</dbReference>
<dbReference type="EMBL" id="BC137470">
    <property type="protein sequence ID" value="AAI37471.1"/>
    <property type="molecule type" value="mRNA"/>
</dbReference>
<dbReference type="EMBL" id="BC137473">
    <property type="protein sequence ID" value="AAI37474.1"/>
    <property type="molecule type" value="mRNA"/>
</dbReference>
<dbReference type="EMBL" id="AY970384">
    <property type="protein sequence ID" value="AAX82193.1"/>
    <property type="molecule type" value="Genomic_DNA"/>
</dbReference>
<dbReference type="EMBL" id="AY970433">
    <property type="protein sequence ID" value="AAX82242.1"/>
    <property type="molecule type" value="Genomic_DNA"/>
</dbReference>
<dbReference type="EMBL" id="AY970451">
    <property type="protein sequence ID" value="AAX82259.1"/>
    <property type="molecule type" value="Genomic_DNA"/>
</dbReference>
<dbReference type="EMBL" id="AY970452">
    <property type="protein sequence ID" value="AAX82260.1"/>
    <property type="molecule type" value="Genomic_DNA"/>
</dbReference>
<dbReference type="CCDS" id="CCDS34163.1"/>
<dbReference type="RefSeq" id="NP_001017992.1">
    <property type="nucleotide sequence ID" value="NM_001017992.4"/>
</dbReference>
<dbReference type="SMR" id="Q562R1"/>
<dbReference type="BioGRID" id="131362">
    <property type="interactions" value="328"/>
</dbReference>
<dbReference type="CORUM" id="Q562R1"/>
<dbReference type="FunCoup" id="Q562R1">
    <property type="interactions" value="1323"/>
</dbReference>
<dbReference type="IntAct" id="Q562R1">
    <property type="interactions" value="220"/>
</dbReference>
<dbReference type="MINT" id="Q562R1"/>
<dbReference type="STRING" id="9606.ENSP00000416706"/>
<dbReference type="GlyGen" id="Q562R1">
    <property type="glycosylation" value="3 sites, 1 N-linked glycan (1 site), 1 O-linked glycan (2 sites)"/>
</dbReference>
<dbReference type="iPTMnet" id="Q562R1"/>
<dbReference type="MetOSite" id="Q562R1"/>
<dbReference type="PhosphoSitePlus" id="Q562R1"/>
<dbReference type="SwissPalm" id="Q562R1"/>
<dbReference type="BioMuta" id="ACTBL2"/>
<dbReference type="DMDM" id="172046825"/>
<dbReference type="jPOST" id="Q562R1"/>
<dbReference type="MassIVE" id="Q562R1"/>
<dbReference type="PaxDb" id="9606-ENSP00000416706"/>
<dbReference type="PeptideAtlas" id="Q562R1"/>
<dbReference type="PRIDE" id="Q562R1"/>
<dbReference type="ProteomicsDB" id="62562"/>
<dbReference type="Pumba" id="Q562R1"/>
<dbReference type="Antibodypedia" id="56201">
    <property type="antibodies" value="69 antibodies from 18 providers"/>
</dbReference>
<dbReference type="DNASU" id="345651"/>
<dbReference type="Ensembl" id="ENST00000423391.3">
    <property type="protein sequence ID" value="ENSP00000416706.1"/>
    <property type="gene ID" value="ENSG00000169067.4"/>
</dbReference>
<dbReference type="GeneID" id="345651"/>
<dbReference type="KEGG" id="hsa:345651"/>
<dbReference type="MANE-Select" id="ENST00000423391.3">
    <property type="protein sequence ID" value="ENSP00000416706.1"/>
    <property type="RefSeq nucleotide sequence ID" value="NM_001017992.4"/>
    <property type="RefSeq protein sequence ID" value="NP_001017992.1"/>
</dbReference>
<dbReference type="UCSC" id="uc003jrm.3">
    <property type="organism name" value="human"/>
</dbReference>
<dbReference type="AGR" id="HGNC:17780"/>
<dbReference type="CTD" id="345651"/>
<dbReference type="DisGeNET" id="345651"/>
<dbReference type="GeneCards" id="ACTBL2"/>
<dbReference type="HGNC" id="HGNC:17780">
    <property type="gene designation" value="ACTBL2"/>
</dbReference>
<dbReference type="HPA" id="ENSG00000169067">
    <property type="expression patterns" value="Not detected"/>
</dbReference>
<dbReference type="MIM" id="614835">
    <property type="type" value="gene"/>
</dbReference>
<dbReference type="neXtProt" id="NX_Q562R1"/>
<dbReference type="OpenTargets" id="ENSG00000169067"/>
<dbReference type="PharmGKB" id="PA142672651"/>
<dbReference type="VEuPathDB" id="HostDB:ENSG00000169067"/>
<dbReference type="eggNOG" id="KOG0676">
    <property type="taxonomic scope" value="Eukaryota"/>
</dbReference>
<dbReference type="GeneTree" id="ENSGT00940000162627"/>
<dbReference type="HOGENOM" id="CLU_027965_0_2_1"/>
<dbReference type="InParanoid" id="Q562R1"/>
<dbReference type="OMA" id="EQEMVGA"/>
<dbReference type="OrthoDB" id="5132116at2759"/>
<dbReference type="PAN-GO" id="Q562R1">
    <property type="GO annotations" value="10 GO annotations based on evolutionary models"/>
</dbReference>
<dbReference type="PhylomeDB" id="Q562R1"/>
<dbReference type="TreeFam" id="TF354237"/>
<dbReference type="PathwayCommons" id="Q562R1"/>
<dbReference type="SignaLink" id="Q562R1"/>
<dbReference type="BioGRID-ORCS" id="345651">
    <property type="hits" value="15 hits in 1150 CRISPR screens"/>
</dbReference>
<dbReference type="CD-CODE" id="232F8A39">
    <property type="entry name" value="P-body"/>
</dbReference>
<dbReference type="CD-CODE" id="DEE660B4">
    <property type="entry name" value="Stress granule"/>
</dbReference>
<dbReference type="GenomeRNAi" id="345651"/>
<dbReference type="Pharos" id="Q562R1">
    <property type="development level" value="Tbio"/>
</dbReference>
<dbReference type="PRO" id="PR:Q562R1"/>
<dbReference type="Proteomes" id="UP000005640">
    <property type="component" value="Chromosome 5"/>
</dbReference>
<dbReference type="RNAct" id="Q562R1">
    <property type="molecule type" value="protein"/>
</dbReference>
<dbReference type="Bgee" id="ENSG00000169067">
    <property type="expression patterns" value="Expressed in cortical plate and 17 other cell types or tissues"/>
</dbReference>
<dbReference type="GO" id="GO:0015629">
    <property type="term" value="C:actin cytoskeleton"/>
    <property type="evidence" value="ECO:0000318"/>
    <property type="project" value="GO_Central"/>
</dbReference>
<dbReference type="GO" id="GO:0005884">
    <property type="term" value="C:actin filament"/>
    <property type="evidence" value="ECO:0000318"/>
    <property type="project" value="GO_Central"/>
</dbReference>
<dbReference type="GO" id="GO:0030424">
    <property type="term" value="C:axon"/>
    <property type="evidence" value="ECO:0000318"/>
    <property type="project" value="GO_Central"/>
</dbReference>
<dbReference type="GO" id="GO:0005737">
    <property type="term" value="C:cytoplasm"/>
    <property type="evidence" value="ECO:0000318"/>
    <property type="project" value="GO_Central"/>
</dbReference>
<dbReference type="GO" id="GO:0070062">
    <property type="term" value="C:extracellular exosome"/>
    <property type="evidence" value="ECO:0007005"/>
    <property type="project" value="UniProtKB"/>
</dbReference>
<dbReference type="GO" id="GO:0005615">
    <property type="term" value="C:extracellular space"/>
    <property type="evidence" value="ECO:0007005"/>
    <property type="project" value="UniProtKB"/>
</dbReference>
<dbReference type="GO" id="GO:0098978">
    <property type="term" value="C:glutamatergic synapse"/>
    <property type="evidence" value="ECO:0000318"/>
    <property type="project" value="GO_Central"/>
</dbReference>
<dbReference type="GO" id="GO:0016020">
    <property type="term" value="C:membrane"/>
    <property type="evidence" value="ECO:0000318"/>
    <property type="project" value="GO_Central"/>
</dbReference>
<dbReference type="GO" id="GO:0035267">
    <property type="term" value="C:NuA4 histone acetyltransferase complex"/>
    <property type="evidence" value="ECO:0000318"/>
    <property type="project" value="GO_Central"/>
</dbReference>
<dbReference type="GO" id="GO:0005524">
    <property type="term" value="F:ATP binding"/>
    <property type="evidence" value="ECO:0007669"/>
    <property type="project" value="UniProtKB-KW"/>
</dbReference>
<dbReference type="GO" id="GO:0019901">
    <property type="term" value="F:protein kinase binding"/>
    <property type="evidence" value="ECO:0000318"/>
    <property type="project" value="GO_Central"/>
</dbReference>
<dbReference type="GO" id="GO:0098973">
    <property type="term" value="F:structural constituent of postsynaptic actin cytoskeleton"/>
    <property type="evidence" value="ECO:0000318"/>
    <property type="project" value="GO_Central"/>
</dbReference>
<dbReference type="GO" id="GO:0007409">
    <property type="term" value="P:axonogenesis"/>
    <property type="evidence" value="ECO:0000318"/>
    <property type="project" value="GO_Central"/>
</dbReference>
<dbReference type="GO" id="GO:0048870">
    <property type="term" value="P:cell motility"/>
    <property type="evidence" value="ECO:0000318"/>
    <property type="project" value="GO_Central"/>
</dbReference>
<dbReference type="CDD" id="cd10224">
    <property type="entry name" value="ASKHA_NBD_actin"/>
    <property type="match status" value="1"/>
</dbReference>
<dbReference type="FunFam" id="3.30.420.40:FF:000131">
    <property type="entry name" value="Actin, alpha skeletal muscle"/>
    <property type="match status" value="1"/>
</dbReference>
<dbReference type="FunFam" id="3.30.420.40:FF:000291">
    <property type="entry name" value="Actin, alpha skeletal muscle"/>
    <property type="match status" value="1"/>
</dbReference>
<dbReference type="FunFam" id="3.90.640.10:FF:000047">
    <property type="entry name" value="Actin, alpha skeletal muscle"/>
    <property type="match status" value="1"/>
</dbReference>
<dbReference type="FunFam" id="3.30.420.40:FF:000058">
    <property type="entry name" value="Putative actin-related protein 5"/>
    <property type="match status" value="1"/>
</dbReference>
<dbReference type="Gene3D" id="3.30.420.40">
    <property type="match status" value="2"/>
</dbReference>
<dbReference type="Gene3D" id="3.90.640.10">
    <property type="entry name" value="Actin, Chain A, domain 4"/>
    <property type="match status" value="1"/>
</dbReference>
<dbReference type="InterPro" id="IPR004000">
    <property type="entry name" value="Actin"/>
</dbReference>
<dbReference type="InterPro" id="IPR020902">
    <property type="entry name" value="Actin/actin-like_CS"/>
</dbReference>
<dbReference type="InterPro" id="IPR004001">
    <property type="entry name" value="Actin_CS"/>
</dbReference>
<dbReference type="InterPro" id="IPR043129">
    <property type="entry name" value="ATPase_NBD"/>
</dbReference>
<dbReference type="PANTHER" id="PTHR11937">
    <property type="entry name" value="ACTIN"/>
    <property type="match status" value="1"/>
</dbReference>
<dbReference type="Pfam" id="PF00022">
    <property type="entry name" value="Actin"/>
    <property type="match status" value="1"/>
</dbReference>
<dbReference type="PRINTS" id="PR00190">
    <property type="entry name" value="ACTIN"/>
</dbReference>
<dbReference type="SMART" id="SM00268">
    <property type="entry name" value="ACTIN"/>
    <property type="match status" value="1"/>
</dbReference>
<dbReference type="SUPFAM" id="SSF53067">
    <property type="entry name" value="Actin-like ATPase domain"/>
    <property type="match status" value="2"/>
</dbReference>
<dbReference type="PROSITE" id="PS00406">
    <property type="entry name" value="ACTINS_1"/>
    <property type="match status" value="1"/>
</dbReference>
<dbReference type="PROSITE" id="PS00432">
    <property type="entry name" value="ACTINS_2"/>
    <property type="match status" value="1"/>
</dbReference>
<dbReference type="PROSITE" id="PS01132">
    <property type="entry name" value="ACTINS_ACT_LIKE"/>
    <property type="match status" value="1"/>
</dbReference>
<sequence>MTDNELSALVVDNGSGMCKAGFGGDDAPRAVFPSMIGRPRHQGVMVGMGQKDCYVGDEAQSKRGVLTLKYPIEHGVVTNWDDMEKIWYHTFYNELRVAPDEHPILLTEAPLNPKINREKMTQIMFEAFNTPAMYVAIQAVLSLYASGRTTGIVMDSGDGVTHIVPIYEGYALPHAILRLDLAGRDLTDYLMKILTERGYNFTTTAEREIVRDVKEKLCYVALDFEQEMVRAAASSSPERSYELPDGQVITIGNERFRCPEAIFQPSFLGIESSGIHETTFNSIMKCDVDIRKDLYANTVLSGGSTMYPGIADRMQKEIITLAPSTMKIKIIAPPERKYSVWIGGSILASLSTFQQMWISKQEYDEAGPPIVHRKCF</sequence>
<protein>
    <recommendedName>
        <fullName>Beta-actin-like protein 2</fullName>
    </recommendedName>
    <alternativeName>
        <fullName>Kappa-actin</fullName>
    </alternativeName>
</protein>
<proteinExistence type="evidence at protein level"/>
<accession>Q562R1</accession>
<accession>B2RPJ1</accession>
<accession>Q562R2</accession>
<accession>Q562S9</accession>
<accession>Q562X8</accession>